<evidence type="ECO:0000250" key="1">
    <source>
        <dbReference type="UniProtKB" id="Q8K4Z6"/>
    </source>
</evidence>
<evidence type="ECO:0000255" key="2"/>
<evidence type="ECO:0000269" key="3">
    <source>
    </source>
</evidence>
<evidence type="ECO:0000269" key="4">
    <source>
    </source>
</evidence>
<evidence type="ECO:0000269" key="5">
    <source>
    </source>
</evidence>
<evidence type="ECO:0000269" key="6">
    <source>
    </source>
</evidence>
<evidence type="ECO:0000269" key="7">
    <source ref="2"/>
</evidence>
<evidence type="ECO:0000303" key="8">
    <source>
    </source>
</evidence>
<evidence type="ECO:0000305" key="9"/>
<reference key="1">
    <citation type="journal article" date="2004" name="Gene">
        <title>Molecular cloning, expression, and sequence analysis of GPRC6A, a novel family C G-protein-coupled receptor.</title>
        <authorList>
            <person name="Wellendorph P."/>
            <person name="Braeuner-Osborne H."/>
        </authorList>
    </citation>
    <scope>NUCLEOTIDE SEQUENCE [MRNA] (ISOFORMS 1; 2 AND 3)</scope>
    <scope>TISSUE SPECIFICITY</scope>
    <scope>VARIANT SER-91</scope>
    <source>
        <tissue>Kidney</tissue>
    </source>
</reference>
<reference key="2">
    <citation type="submission" date="2002-04" db="EMBL/GenBank/DDBJ databases">
        <title>Cloning of a metabotropic glutamate/pheromone receptor (GPRC6A).</title>
        <authorList>
            <person name="Lorenz-Depiereux B."/>
            <person name="Dorner M."/>
            <person name="Strom T.M."/>
        </authorList>
    </citation>
    <scope>NUCLEOTIDE SEQUENCE [MRNA] (ISOFORM 1)</scope>
    <scope>VARIANT SER-91</scope>
    <source>
        <tissue>Kidney</tissue>
    </source>
</reference>
<reference key="3">
    <citation type="journal article" date="2003" name="Nature">
        <title>The DNA sequence and analysis of human chromosome 6.</title>
        <authorList>
            <person name="Mungall A.J."/>
            <person name="Palmer S.A."/>
            <person name="Sims S.K."/>
            <person name="Edwards C.A."/>
            <person name="Ashurst J.L."/>
            <person name="Wilming L."/>
            <person name="Jones M.C."/>
            <person name="Horton R."/>
            <person name="Hunt S.E."/>
            <person name="Scott C.E."/>
            <person name="Gilbert J.G.R."/>
            <person name="Clamp M.E."/>
            <person name="Bethel G."/>
            <person name="Milne S."/>
            <person name="Ainscough R."/>
            <person name="Almeida J.P."/>
            <person name="Ambrose K.D."/>
            <person name="Andrews T.D."/>
            <person name="Ashwell R.I.S."/>
            <person name="Babbage A.K."/>
            <person name="Bagguley C.L."/>
            <person name="Bailey J."/>
            <person name="Banerjee R."/>
            <person name="Barker D.J."/>
            <person name="Barlow K.F."/>
            <person name="Bates K."/>
            <person name="Beare D.M."/>
            <person name="Beasley H."/>
            <person name="Beasley O."/>
            <person name="Bird C.P."/>
            <person name="Blakey S.E."/>
            <person name="Bray-Allen S."/>
            <person name="Brook J."/>
            <person name="Brown A.J."/>
            <person name="Brown J.Y."/>
            <person name="Burford D.C."/>
            <person name="Burrill W."/>
            <person name="Burton J."/>
            <person name="Carder C."/>
            <person name="Carter N.P."/>
            <person name="Chapman J.C."/>
            <person name="Clark S.Y."/>
            <person name="Clark G."/>
            <person name="Clee C.M."/>
            <person name="Clegg S."/>
            <person name="Cobley V."/>
            <person name="Collier R.E."/>
            <person name="Collins J.E."/>
            <person name="Colman L.K."/>
            <person name="Corby N.R."/>
            <person name="Coville G.J."/>
            <person name="Culley K.M."/>
            <person name="Dhami P."/>
            <person name="Davies J."/>
            <person name="Dunn M."/>
            <person name="Earthrowl M.E."/>
            <person name="Ellington A.E."/>
            <person name="Evans K.A."/>
            <person name="Faulkner L."/>
            <person name="Francis M.D."/>
            <person name="Frankish A."/>
            <person name="Frankland J."/>
            <person name="French L."/>
            <person name="Garner P."/>
            <person name="Garnett J."/>
            <person name="Ghori M.J."/>
            <person name="Gilby L.M."/>
            <person name="Gillson C.J."/>
            <person name="Glithero R.J."/>
            <person name="Grafham D.V."/>
            <person name="Grant M."/>
            <person name="Gribble S."/>
            <person name="Griffiths C."/>
            <person name="Griffiths M.N.D."/>
            <person name="Hall R."/>
            <person name="Halls K.S."/>
            <person name="Hammond S."/>
            <person name="Harley J.L."/>
            <person name="Hart E.A."/>
            <person name="Heath P.D."/>
            <person name="Heathcott R."/>
            <person name="Holmes S.J."/>
            <person name="Howden P.J."/>
            <person name="Howe K.L."/>
            <person name="Howell G.R."/>
            <person name="Huckle E."/>
            <person name="Humphray S.J."/>
            <person name="Humphries M.D."/>
            <person name="Hunt A.R."/>
            <person name="Johnson C.M."/>
            <person name="Joy A.A."/>
            <person name="Kay M."/>
            <person name="Keenan S.J."/>
            <person name="Kimberley A.M."/>
            <person name="King A."/>
            <person name="Laird G.K."/>
            <person name="Langford C."/>
            <person name="Lawlor S."/>
            <person name="Leongamornlert D.A."/>
            <person name="Leversha M."/>
            <person name="Lloyd C.R."/>
            <person name="Lloyd D.M."/>
            <person name="Loveland J.E."/>
            <person name="Lovell J."/>
            <person name="Martin S."/>
            <person name="Mashreghi-Mohammadi M."/>
            <person name="Maslen G.L."/>
            <person name="Matthews L."/>
            <person name="McCann O.T."/>
            <person name="McLaren S.J."/>
            <person name="McLay K."/>
            <person name="McMurray A."/>
            <person name="Moore M.J.F."/>
            <person name="Mullikin J.C."/>
            <person name="Niblett D."/>
            <person name="Nickerson T."/>
            <person name="Novik K.L."/>
            <person name="Oliver K."/>
            <person name="Overton-Larty E.K."/>
            <person name="Parker A."/>
            <person name="Patel R."/>
            <person name="Pearce A.V."/>
            <person name="Peck A.I."/>
            <person name="Phillimore B.J.C.T."/>
            <person name="Phillips S."/>
            <person name="Plumb R.W."/>
            <person name="Porter K.M."/>
            <person name="Ramsey Y."/>
            <person name="Ranby S.A."/>
            <person name="Rice C.M."/>
            <person name="Ross M.T."/>
            <person name="Searle S.M."/>
            <person name="Sehra H.K."/>
            <person name="Sheridan E."/>
            <person name="Skuce C.D."/>
            <person name="Smith S."/>
            <person name="Smith M."/>
            <person name="Spraggon L."/>
            <person name="Squares S.L."/>
            <person name="Steward C.A."/>
            <person name="Sycamore N."/>
            <person name="Tamlyn-Hall G."/>
            <person name="Tester J."/>
            <person name="Theaker A.J."/>
            <person name="Thomas D.W."/>
            <person name="Thorpe A."/>
            <person name="Tracey A."/>
            <person name="Tromans A."/>
            <person name="Tubby B."/>
            <person name="Wall M."/>
            <person name="Wallis J.M."/>
            <person name="West A.P."/>
            <person name="White S.S."/>
            <person name="Whitehead S.L."/>
            <person name="Whittaker H."/>
            <person name="Wild A."/>
            <person name="Willey D.J."/>
            <person name="Wilmer T.E."/>
            <person name="Wood J.M."/>
            <person name="Wray P.W."/>
            <person name="Wyatt J.C."/>
            <person name="Young L."/>
            <person name="Younger R.M."/>
            <person name="Bentley D.R."/>
            <person name="Coulson A."/>
            <person name="Durbin R.M."/>
            <person name="Hubbard T."/>
            <person name="Sulston J.E."/>
            <person name="Dunham I."/>
            <person name="Rogers J."/>
            <person name="Beck S."/>
        </authorList>
    </citation>
    <scope>NUCLEOTIDE SEQUENCE [LARGE SCALE GENOMIC DNA]</scope>
</reference>
<reference key="4">
    <citation type="submission" date="2001-07" db="EMBL/GenBank/DDBJ databases">
        <title>Genome-wide discovery and analysis of human seven transmembrane helix receptor genes.</title>
        <authorList>
            <person name="Suwa M."/>
            <person name="Sato T."/>
            <person name="Okouchi I."/>
            <person name="Arita M."/>
            <person name="Futami K."/>
            <person name="Matsumoto S."/>
            <person name="Tsutsumi S."/>
            <person name="Aburatani H."/>
            <person name="Asai K."/>
            <person name="Akiyama Y."/>
        </authorList>
    </citation>
    <scope>NUCLEOTIDE SEQUENCE [GENOMIC DNA] OF 66-926</scope>
</reference>
<reference key="5">
    <citation type="journal article" date="2002" name="FEBS Lett.">
        <title>Identification of G protein-coupled receptor genes from the human genome sequence.</title>
        <authorList>
            <person name="Takeda S."/>
            <person name="Kadowaki S."/>
            <person name="Haga T."/>
            <person name="Takaesu H."/>
            <person name="Mitaku S."/>
        </authorList>
    </citation>
    <scope>NUCLEOTIDE SEQUENCE [GENOMIC DNA] OF 559-926</scope>
</reference>
<reference key="6">
    <citation type="journal article" date="2005" name="Mol. Pharmacol.">
        <title>Deorphanization of GPRC6A: a promiscuous L-alpha-amino acid receptor with preference for basic amino acids.</title>
        <authorList>
            <person name="Wellendorph P."/>
            <person name="Hansen K.B."/>
            <person name="Balsgaard A."/>
            <person name="Greenwood J.R."/>
            <person name="Egebjerg J."/>
            <person name="Brauener-Osborne H."/>
        </authorList>
    </citation>
    <scope>FUNCTION</scope>
    <scope>MUTAGENESIS OF SER-149 AND THR-172</scope>
</reference>
<reference key="7">
    <citation type="journal article" date="2010" name="J. Biol. Chem.">
        <title>GPRC6A mediates the non-genomic effects of steroids.</title>
        <authorList>
            <person name="Pi M."/>
            <person name="Parrill A.L."/>
            <person name="Quarles L.D."/>
        </authorList>
    </citation>
    <scope>FUNCTION</scope>
</reference>
<reference key="8">
    <citation type="journal article" date="2015" name="FEBS Lett.">
        <title>N-glycosylation and disulfide bonding affects GPRC6A receptor expression, function, and dimerization.</title>
        <authorList>
            <person name="Norskov-Lauritsen L."/>
            <person name="Jorgensen S."/>
            <person name="Brauner-Osborne H."/>
        </authorList>
    </citation>
    <scope>SUBUNIT</scope>
    <scope>DISULFIDE BOND</scope>
    <scope>GLYCOSYLATION AT ASN-121; ASN-259; ASN-332; ASN-378; ASN-452; ASN-555 AND ASN-567</scope>
</reference>
<feature type="signal peptide" evidence="2">
    <location>
        <begin position="1"/>
        <end position="18"/>
    </location>
</feature>
<feature type="chain" id="PRO_0000043196" description="G-protein coupled receptor family C group 6 member A">
    <location>
        <begin position="19"/>
        <end position="926"/>
    </location>
</feature>
<feature type="topological domain" description="Extracellular" evidence="2">
    <location>
        <begin position="19"/>
        <end position="594"/>
    </location>
</feature>
<feature type="transmembrane region" description="Helical; Name=1" evidence="2">
    <location>
        <begin position="595"/>
        <end position="615"/>
    </location>
</feature>
<feature type="topological domain" description="Cytoplasmic" evidence="2">
    <location>
        <begin position="616"/>
        <end position="631"/>
    </location>
</feature>
<feature type="transmembrane region" description="Helical; Name=2" evidence="2">
    <location>
        <begin position="632"/>
        <end position="652"/>
    </location>
</feature>
<feature type="topological domain" description="Extracellular" evidence="2">
    <location>
        <begin position="653"/>
        <end position="669"/>
    </location>
</feature>
<feature type="transmembrane region" description="Helical; Name=3" evidence="2">
    <location>
        <begin position="670"/>
        <end position="690"/>
    </location>
</feature>
<feature type="topological domain" description="Cytoplasmic" evidence="2">
    <location>
        <begin position="691"/>
        <end position="704"/>
    </location>
</feature>
<feature type="transmembrane region" description="Helical; Name=4" evidence="2">
    <location>
        <begin position="705"/>
        <end position="725"/>
    </location>
</feature>
<feature type="topological domain" description="Extracellular" evidence="2">
    <location>
        <begin position="726"/>
        <end position="748"/>
    </location>
</feature>
<feature type="transmembrane region" description="Helical; Name=5" evidence="2">
    <location>
        <begin position="749"/>
        <end position="769"/>
    </location>
</feature>
<feature type="topological domain" description="Cytoplasmic" evidence="2">
    <location>
        <begin position="770"/>
        <end position="782"/>
    </location>
</feature>
<feature type="transmembrane region" description="Helical; Name=6" evidence="2">
    <location>
        <begin position="783"/>
        <end position="803"/>
    </location>
</feature>
<feature type="topological domain" description="Extracellular" evidence="2">
    <location>
        <begin position="804"/>
        <end position="810"/>
    </location>
</feature>
<feature type="transmembrane region" description="Helical; Name=7" evidence="2">
    <location>
        <begin position="811"/>
        <end position="831"/>
    </location>
</feature>
<feature type="topological domain" description="Cytoplasmic" evidence="2">
    <location>
        <begin position="832"/>
        <end position="926"/>
    </location>
</feature>
<feature type="glycosylation site" description="N-linked (GlcNAc...) asparagine" evidence="6">
    <location>
        <position position="121"/>
    </location>
</feature>
<feature type="glycosylation site" description="N-linked (GlcNAc...) asparagine" evidence="6">
    <location>
        <position position="259"/>
    </location>
</feature>
<feature type="glycosylation site" description="N-linked (GlcNAc...) asparagine" evidence="6">
    <location>
        <position position="332"/>
    </location>
</feature>
<feature type="glycosylation site" description="N-linked (GlcNAc...) asparagine" evidence="6">
    <location>
        <position position="378"/>
    </location>
</feature>
<feature type="glycosylation site" description="N-linked (GlcNAc...) asparagine" evidence="6">
    <location>
        <position position="452"/>
    </location>
</feature>
<feature type="glycosylation site" description="N-linked (GlcNAc...) asparagine" evidence="6">
    <location>
        <position position="555"/>
    </location>
</feature>
<feature type="glycosylation site" description="N-linked (GlcNAc...) asparagine" evidence="6">
    <location>
        <position position="567"/>
    </location>
</feature>
<feature type="glycosylation site" description="N-linked (GlcNAc...) asparagine" evidence="2">
    <location>
        <position position="590"/>
    </location>
</feature>
<feature type="glycosylation site" description="N-linked (GlcNAc...) asparagine" evidence="2">
    <location>
        <position position="733"/>
    </location>
</feature>
<feature type="disulfide bond" description="Interchain" evidence="6">
    <location>
        <position position="131"/>
    </location>
</feature>
<feature type="splice variant" id="VSP_016454" description="In isoform 2." evidence="8">
    <location>
        <begin position="271"/>
        <end position="445"/>
    </location>
</feature>
<feature type="splice variant" id="VSP_016455" description="In isoform 3." evidence="8">
    <location>
        <begin position="446"/>
        <end position="516"/>
    </location>
</feature>
<feature type="sequence variant" id="VAR_023966" description="In dbSNP:rs2274911." evidence="3 7">
    <original>P</original>
    <variation>S</variation>
    <location>
        <position position="91"/>
    </location>
</feature>
<feature type="sequence variant" id="VAR_049283" description="In dbSNP:rs28360548.">
    <original>I</original>
    <variation>R</variation>
    <location>
        <position position="144"/>
    </location>
</feature>
<feature type="sequence variant" id="VAR_061203" description="In dbSNP:rs35937022.">
    <original>I</original>
    <variation>T</variation>
    <location>
        <position position="599"/>
    </location>
</feature>
<feature type="mutagenesis site" description="Loss of function." evidence="4">
    <original>S</original>
    <variation>A</variation>
    <location>
        <position position="149"/>
    </location>
</feature>
<feature type="mutagenesis site" description="Loss of function." evidence="4">
    <original>T</original>
    <variation>A</variation>
    <location>
        <position position="172"/>
    </location>
</feature>
<comment type="function">
    <text evidence="1 4 5">Receptor activated by multiple ligands, including osteocalcin (BGLAP), basic amino acids, and various cations (PubMed:15576628). Activated by amino acids with a preference for basic amino acids such as L-Lys, L-Arg and L-ornithine but also by small and polar amino acids (PubMed:15576628). The L-alpha amino acids respond is augmented by divalent cations Ca(2+) and Mg(2+) (By similarity). Seems to act through a G(q)/G(11) and G(i)-coupled pathway (By similarity). Regulates testosterone production by acting as a ligand for uncarboxylated osteocalcin hormone: osteocalcin-binding at the surface of Leydig cells initiates a signaling response that promotes the expression of enzymes required for testosterone synthesis in a CREB-dependent manner (By similarity). Mediates the non-genomic effects of androgens in multiple tissue (By similarity). May coordinate nutritional and hormonal anabolic signals through the sensing of extracellular amino acids, osteocalcin, divalent ions and its responsiveness to anabolic steroids (PubMed:20947496).</text>
</comment>
<comment type="subunit">
    <text evidence="6">Homodimer; disulfide-linked.</text>
</comment>
<comment type="subcellular location">
    <subcellularLocation>
        <location evidence="1">Cell membrane</location>
        <topology evidence="1">Multi-pass membrane protein</topology>
    </subcellularLocation>
</comment>
<comment type="alternative products">
    <event type="alternative splicing"/>
    <isoform>
        <id>Q5T6X5-1</id>
        <name>1</name>
        <sequence type="displayed"/>
    </isoform>
    <isoform>
        <id>Q5T6X5-2</id>
        <name>2</name>
        <sequence type="described" ref="VSP_016454"/>
    </isoform>
    <isoform>
        <id>Q5T6X5-3</id>
        <name>3</name>
        <sequence type="described" ref="VSP_016455"/>
    </isoform>
</comment>
<comment type="tissue specificity">
    <text evidence="3">Isoform 1 is expressed at high level in brain, skeletal muscle, testis, bone, calvaria, osteoblasts and leukocytes. Expressed at intermediate level in liver, heart, kidney and spleen. Expressed at low level in lung, pancreas, placenta and ovary. Not detected in thymus, prostate, small intestine, tongue and colon. Isoform 1 and isoform 2 are expressed in kidney at the same level. Isoform 2 is expressed at lower level than isoform 1 in the other tissues.</text>
</comment>
<comment type="miscellaneous">
    <molecule>Isoform 1</molecule>
    <text>Major isoform.</text>
</comment>
<comment type="similarity">
    <text evidence="9">Belongs to the G-protein coupled receptor 3 family.</text>
</comment>
<comment type="sequence caution" evidence="9">
    <conflict type="erroneous gene model prediction">
        <sequence resource="EMBL-CDS" id="BAC05904"/>
    </conflict>
</comment>
<sequence length="926" mass="104753">MAFLIILITCFVIILATSQPCQTPDDFVAATSPGHIIIGGLFAIHEKMLSSEDSPRRPQIQECVGFEISVFLQTLAMIHSIEMINNSTLLPGVKLGYEIYDTCTEVTVAMAATLRFLSKFNCSRETVEFKCDYSSYMPRVKAVIGSGYSEITMAVSRMLNLQLMPQVGYESTAEILSDKIRFPSFLRTVPSDFHQIKAMAHLIQKSGWNWIGIITTDDDYGRLALNTFIIQAEANNVCIAFKEVLPAFLSDNTIEVRINRTLKKIILEAQVNVIVVFLRQFHVFDLFNKAIEMNINKMWIASDNWSTATKITTIPNVKKIGKVVGFAFRRGNISSFHSFLQNLHLLPSDSHKLLHEYAMHLSACAYVKDTDLSQCIFNHSQRTLAYKANKAIERNFVMRNDFLWDYAEPGLIHSIQLAVFALGYAIRDLCQARDCQNPNAFQPWELLGVLKNVTFTDGWNSFHFDAHGDLNTGYDVVLWKEINGHMTVTKMAEYDLQNDVFIIPDQETKNEFRNLKQIQSKCSKECSPGQMKKTTRSQHICCYECQNCPENHYTNQTDMPHCLLCNNKTHWAPVRSTMCFEKEVEYLNWNDSLAILLLILSLLGIIFVLVVGIIFTRNLNTPVVKSSGGLRVCYVILLCHFLNFASTSFFIGEPQDFTCKTRQTMFGVSFTLCISCILTKSLKILLAFSFDPKLQKFLKCLYRPILIIFTCTGIQVVICTLWLIFAAPTVEVNVSLPRVIILECEEGSILAFGTMLGYIAILAFICFIFAFKGKYENYNEAKFITFGMLIYFIAWITFIPIYATTFGKYVPAVEIIVILISNYGILYCTFIPKCYVIICKQEINTKSAFLKMIYSYSSHSVSSIALSPASLDSMSGNVTMTNPSSSGKSATWQKSKDLQAQAFAHICRENATSVSKTLPRKRMSSI</sequence>
<proteinExistence type="evidence at protein level"/>
<organism>
    <name type="scientific">Homo sapiens</name>
    <name type="common">Human</name>
    <dbReference type="NCBI Taxonomy" id="9606"/>
    <lineage>
        <taxon>Eukaryota</taxon>
        <taxon>Metazoa</taxon>
        <taxon>Chordata</taxon>
        <taxon>Craniata</taxon>
        <taxon>Vertebrata</taxon>
        <taxon>Euteleostomi</taxon>
        <taxon>Mammalia</taxon>
        <taxon>Eutheria</taxon>
        <taxon>Euarchontoglires</taxon>
        <taxon>Primates</taxon>
        <taxon>Haplorrhini</taxon>
        <taxon>Catarrhini</taxon>
        <taxon>Hominidae</taxon>
        <taxon>Homo</taxon>
    </lineage>
</organism>
<protein>
    <recommendedName>
        <fullName>G-protein coupled receptor family C group 6 member A</fullName>
        <shortName>hGPRC6A</shortName>
    </recommendedName>
    <alternativeName>
        <fullName>G-protein coupled receptor GPCR33</fullName>
        <shortName>hGPCR33</shortName>
    </alternativeName>
</protein>
<dbReference type="EMBL" id="AY435125">
    <property type="protein sequence ID" value="AAS13465.1"/>
    <property type="molecule type" value="mRNA"/>
</dbReference>
<dbReference type="EMBL" id="AY435126">
    <property type="protein sequence ID" value="AAS13466.1"/>
    <property type="molecule type" value="mRNA"/>
</dbReference>
<dbReference type="EMBL" id="AY435127">
    <property type="protein sequence ID" value="AAS13467.1"/>
    <property type="molecule type" value="mRNA"/>
</dbReference>
<dbReference type="EMBL" id="AF502962">
    <property type="protein sequence ID" value="AAM22230.1"/>
    <property type="molecule type" value="mRNA"/>
</dbReference>
<dbReference type="EMBL" id="AL354716">
    <property type="status" value="NOT_ANNOTATED_CDS"/>
    <property type="molecule type" value="Genomic_DNA"/>
</dbReference>
<dbReference type="EMBL" id="AB065680">
    <property type="protein sequence ID" value="BAC05904.1"/>
    <property type="status" value="ALT_SEQ"/>
    <property type="molecule type" value="Genomic_DNA"/>
</dbReference>
<dbReference type="EMBL" id="AB083615">
    <property type="protein sequence ID" value="BAB89328.1"/>
    <property type="molecule type" value="Genomic_DNA"/>
</dbReference>
<dbReference type="CCDS" id="CCDS5112.1">
    <molecule id="Q5T6X5-1"/>
</dbReference>
<dbReference type="CCDS" id="CCDS69184.1">
    <molecule id="Q5T6X5-3"/>
</dbReference>
<dbReference type="CCDS" id="CCDS69185.1">
    <molecule id="Q5T6X5-2"/>
</dbReference>
<dbReference type="RefSeq" id="NP_001273283.1">
    <molecule id="Q5T6X5-2"/>
    <property type="nucleotide sequence ID" value="NM_001286354.1"/>
</dbReference>
<dbReference type="RefSeq" id="NP_001273284.1">
    <molecule id="Q5T6X5-3"/>
    <property type="nucleotide sequence ID" value="NM_001286355.1"/>
</dbReference>
<dbReference type="RefSeq" id="NP_683766.2">
    <molecule id="Q5T6X5-1"/>
    <property type="nucleotide sequence ID" value="NM_148963.4"/>
</dbReference>
<dbReference type="SMR" id="Q5T6X5"/>
<dbReference type="FunCoup" id="Q5T6X5">
    <property type="interactions" value="309"/>
</dbReference>
<dbReference type="STRING" id="9606.ENSP00000309493"/>
<dbReference type="ChEMBL" id="CHEMBL4523873"/>
<dbReference type="DrugCentral" id="Q5T6X5"/>
<dbReference type="GuidetoPHARMACOLOGY" id="55"/>
<dbReference type="TCDB" id="9.A.14.7.3">
    <property type="family name" value="the g-protein-coupled receptor (gpcr) family"/>
</dbReference>
<dbReference type="GlyCosmos" id="Q5T6X5">
    <property type="glycosylation" value="9 sites, No reported glycans"/>
</dbReference>
<dbReference type="GlyGen" id="Q5T6X5">
    <property type="glycosylation" value="10 sites"/>
</dbReference>
<dbReference type="iPTMnet" id="Q5T6X5"/>
<dbReference type="PhosphoSitePlus" id="Q5T6X5"/>
<dbReference type="BioMuta" id="GPRC6A"/>
<dbReference type="DMDM" id="74745292"/>
<dbReference type="PaxDb" id="9606-ENSP00000309493"/>
<dbReference type="PeptideAtlas" id="Q5T6X5"/>
<dbReference type="ProteomicsDB" id="64622">
    <molecule id="Q5T6X5-1"/>
</dbReference>
<dbReference type="ProteomicsDB" id="64623">
    <molecule id="Q5T6X5-2"/>
</dbReference>
<dbReference type="ProteomicsDB" id="64624">
    <molecule id="Q5T6X5-3"/>
</dbReference>
<dbReference type="Antibodypedia" id="19443">
    <property type="antibodies" value="265 antibodies from 28 providers"/>
</dbReference>
<dbReference type="DNASU" id="222545"/>
<dbReference type="Ensembl" id="ENST00000310357.8">
    <molecule id="Q5T6X5-1"/>
    <property type="protein sequence ID" value="ENSP00000309493.4"/>
    <property type="gene ID" value="ENSG00000173612.10"/>
</dbReference>
<dbReference type="Ensembl" id="ENST00000368549.7">
    <molecule id="Q5T6X5-3"/>
    <property type="protein sequence ID" value="ENSP00000357537.3"/>
    <property type="gene ID" value="ENSG00000173612.10"/>
</dbReference>
<dbReference type="Ensembl" id="ENST00000530250.1">
    <molecule id="Q5T6X5-2"/>
    <property type="protein sequence ID" value="ENSP00000433465.1"/>
    <property type="gene ID" value="ENSG00000173612.10"/>
</dbReference>
<dbReference type="GeneID" id="222545"/>
<dbReference type="KEGG" id="hsa:222545"/>
<dbReference type="MANE-Select" id="ENST00000310357.8">
    <property type="protein sequence ID" value="ENSP00000309493.4"/>
    <property type="RefSeq nucleotide sequence ID" value="NM_148963.4"/>
    <property type="RefSeq protein sequence ID" value="NP_683766.2"/>
</dbReference>
<dbReference type="UCSC" id="uc003pxj.3">
    <molecule id="Q5T6X5-1"/>
    <property type="organism name" value="human"/>
</dbReference>
<dbReference type="AGR" id="HGNC:18510"/>
<dbReference type="CTD" id="222545"/>
<dbReference type="DisGeNET" id="222545"/>
<dbReference type="GeneCards" id="GPRC6A"/>
<dbReference type="HGNC" id="HGNC:18510">
    <property type="gene designation" value="GPRC6A"/>
</dbReference>
<dbReference type="HPA" id="ENSG00000173612">
    <property type="expression patterns" value="Not detected"/>
</dbReference>
<dbReference type="MIM" id="613572">
    <property type="type" value="gene"/>
</dbReference>
<dbReference type="neXtProt" id="NX_Q5T6X5"/>
<dbReference type="OpenTargets" id="ENSG00000173612"/>
<dbReference type="PharmGKB" id="PA38342"/>
<dbReference type="VEuPathDB" id="HostDB:ENSG00000173612"/>
<dbReference type="eggNOG" id="KOG1056">
    <property type="taxonomic scope" value="Eukaryota"/>
</dbReference>
<dbReference type="GeneTree" id="ENSGT00940000158416"/>
<dbReference type="HOGENOM" id="CLU_005389_1_0_1"/>
<dbReference type="InParanoid" id="Q5T6X5"/>
<dbReference type="OMA" id="ASPHTCC"/>
<dbReference type="OrthoDB" id="425344at2759"/>
<dbReference type="PAN-GO" id="Q5T6X5">
    <property type="GO annotations" value="2 GO annotations based on evolutionary models"/>
</dbReference>
<dbReference type="PhylomeDB" id="Q5T6X5"/>
<dbReference type="TreeFam" id="TF331269"/>
<dbReference type="PathwayCommons" id="Q5T6X5"/>
<dbReference type="Reactome" id="R-HSA-416476">
    <property type="pathway name" value="G alpha (q) signalling events"/>
</dbReference>
<dbReference type="Reactome" id="R-HSA-420499">
    <property type="pathway name" value="Class C/3 (Metabotropic glutamate/pheromone receptors)"/>
</dbReference>
<dbReference type="BioGRID-ORCS" id="222545">
    <property type="hits" value="12 hits in 1145 CRISPR screens"/>
</dbReference>
<dbReference type="GeneWiki" id="GPRC6A"/>
<dbReference type="GenomeRNAi" id="222545"/>
<dbReference type="Pharos" id="Q5T6X5">
    <property type="development level" value="Tchem"/>
</dbReference>
<dbReference type="PRO" id="PR:Q5T6X5"/>
<dbReference type="Proteomes" id="UP000005640">
    <property type="component" value="Chromosome 6"/>
</dbReference>
<dbReference type="RNAct" id="Q5T6X5">
    <property type="molecule type" value="protein"/>
</dbReference>
<dbReference type="Bgee" id="ENSG00000173612">
    <property type="expression patterns" value="Expressed in male germ line stem cell (sensu Vertebrata) in testis and 13 other cell types or tissues"/>
</dbReference>
<dbReference type="GO" id="GO:0009986">
    <property type="term" value="C:cell surface"/>
    <property type="evidence" value="ECO:0007669"/>
    <property type="project" value="Ensembl"/>
</dbReference>
<dbReference type="GO" id="GO:0005886">
    <property type="term" value="C:plasma membrane"/>
    <property type="evidence" value="ECO:0000318"/>
    <property type="project" value="GO_Central"/>
</dbReference>
<dbReference type="GO" id="GO:0008528">
    <property type="term" value="F:G protein-coupled peptide receptor activity"/>
    <property type="evidence" value="ECO:0007669"/>
    <property type="project" value="Ensembl"/>
</dbReference>
<dbReference type="GO" id="GO:0004930">
    <property type="term" value="F:G protein-coupled receptor activity"/>
    <property type="evidence" value="ECO:0000250"/>
    <property type="project" value="UniProtKB"/>
</dbReference>
<dbReference type="GO" id="GO:0007189">
    <property type="term" value="P:adenylate cyclase-activating G protein-coupled receptor signaling pathway"/>
    <property type="evidence" value="ECO:0007669"/>
    <property type="project" value="Ensembl"/>
</dbReference>
<dbReference type="GO" id="GO:0019722">
    <property type="term" value="P:calcium-mediated signaling"/>
    <property type="evidence" value="ECO:0007669"/>
    <property type="project" value="Ensembl"/>
</dbReference>
<dbReference type="GO" id="GO:0035774">
    <property type="term" value="P:positive regulation of insulin secretion involved in cellular response to glucose stimulus"/>
    <property type="evidence" value="ECO:0007669"/>
    <property type="project" value="Ensembl"/>
</dbReference>
<dbReference type="GO" id="GO:2000224">
    <property type="term" value="P:regulation of testosterone biosynthetic process"/>
    <property type="evidence" value="ECO:0000250"/>
    <property type="project" value="UniProtKB"/>
</dbReference>
<dbReference type="GO" id="GO:0043200">
    <property type="term" value="P:response to amino acid"/>
    <property type="evidence" value="ECO:0000314"/>
    <property type="project" value="UniProtKB"/>
</dbReference>
<dbReference type="CDD" id="cd06361">
    <property type="entry name" value="PBP1_GPC6A-like"/>
    <property type="match status" value="1"/>
</dbReference>
<dbReference type="FunFam" id="3.40.50.2300:FF:000152">
    <property type="entry name" value="G protein-coupled receptor class C group 6 member A"/>
    <property type="match status" value="1"/>
</dbReference>
<dbReference type="FunFam" id="2.10.50.30:FF:000004">
    <property type="entry name" value="Taste receptor type 1 member 3-like protein"/>
    <property type="match status" value="1"/>
</dbReference>
<dbReference type="Gene3D" id="3.40.50.2300">
    <property type="match status" value="2"/>
</dbReference>
<dbReference type="Gene3D" id="2.10.50.30">
    <property type="entry name" value="GPCR, family 3, nine cysteines domain"/>
    <property type="match status" value="1"/>
</dbReference>
<dbReference type="InterPro" id="IPR001828">
    <property type="entry name" value="ANF_lig-bd_rcpt"/>
</dbReference>
<dbReference type="InterPro" id="IPR000337">
    <property type="entry name" value="GPCR_3"/>
</dbReference>
<dbReference type="InterPro" id="IPR011500">
    <property type="entry name" value="GPCR_3_9-Cys_dom"/>
</dbReference>
<dbReference type="InterPro" id="IPR038550">
    <property type="entry name" value="GPCR_3_9-Cys_sf"/>
</dbReference>
<dbReference type="InterPro" id="IPR017978">
    <property type="entry name" value="GPCR_3_C"/>
</dbReference>
<dbReference type="InterPro" id="IPR000068">
    <property type="entry name" value="GPCR_3_Ca_sens_rcpt-rel"/>
</dbReference>
<dbReference type="InterPro" id="IPR017979">
    <property type="entry name" value="GPCR_3_CS"/>
</dbReference>
<dbReference type="InterPro" id="IPR028082">
    <property type="entry name" value="Peripla_BP_I"/>
</dbReference>
<dbReference type="PANTHER" id="PTHR24061">
    <property type="entry name" value="CALCIUM-SENSING RECEPTOR-RELATED"/>
    <property type="match status" value="1"/>
</dbReference>
<dbReference type="PANTHER" id="PTHR24061:SF5">
    <property type="entry name" value="G-PROTEIN COUPLED RECEPTOR FAMILY C GROUP 6 MEMBER A"/>
    <property type="match status" value="1"/>
</dbReference>
<dbReference type="Pfam" id="PF00003">
    <property type="entry name" value="7tm_3"/>
    <property type="match status" value="1"/>
</dbReference>
<dbReference type="Pfam" id="PF01094">
    <property type="entry name" value="ANF_receptor"/>
    <property type="match status" value="1"/>
</dbReference>
<dbReference type="Pfam" id="PF07562">
    <property type="entry name" value="NCD3G"/>
    <property type="match status" value="1"/>
</dbReference>
<dbReference type="PRINTS" id="PR00592">
    <property type="entry name" value="CASENSINGR"/>
</dbReference>
<dbReference type="PRINTS" id="PR00248">
    <property type="entry name" value="GPCRMGR"/>
</dbReference>
<dbReference type="SUPFAM" id="SSF53822">
    <property type="entry name" value="Periplasmic binding protein-like I"/>
    <property type="match status" value="1"/>
</dbReference>
<dbReference type="PROSITE" id="PS00980">
    <property type="entry name" value="G_PROTEIN_RECEP_F3_2"/>
    <property type="match status" value="1"/>
</dbReference>
<dbReference type="PROSITE" id="PS50259">
    <property type="entry name" value="G_PROTEIN_RECEP_F3_4"/>
    <property type="match status" value="1"/>
</dbReference>
<accession>Q5T6X5</accession>
<accession>Q6JK43</accession>
<accession>Q6JK44</accession>
<accession>Q8NGU8</accession>
<accession>Q8NHZ9</accession>
<accession>Q8TDT6</accession>
<keyword id="KW-0025">Alternative splicing</keyword>
<keyword id="KW-1003">Cell membrane</keyword>
<keyword id="KW-1015">Disulfide bond</keyword>
<keyword id="KW-0297">G-protein coupled receptor</keyword>
<keyword id="KW-0325">Glycoprotein</keyword>
<keyword id="KW-0472">Membrane</keyword>
<keyword id="KW-0675">Receptor</keyword>
<keyword id="KW-1185">Reference proteome</keyword>
<keyword id="KW-0732">Signal</keyword>
<keyword id="KW-0807">Transducer</keyword>
<keyword id="KW-0812">Transmembrane</keyword>
<keyword id="KW-1133">Transmembrane helix</keyword>
<name>GPC6A_HUMAN</name>
<gene>
    <name type="primary">GPRC6A</name>
</gene>